<dbReference type="EMBL" id="BC068933">
    <property type="protein sequence ID" value="AAH68933.1"/>
    <property type="status" value="ALT_INIT"/>
    <property type="molecule type" value="mRNA"/>
</dbReference>
<dbReference type="SMR" id="Q6NTM6"/>
<dbReference type="AGR" id="Xenbase:XB-GENE-5779667"/>
<dbReference type="Xenbase" id="XB-GENE-5779667">
    <property type="gene designation" value="cfap73.S"/>
</dbReference>
<dbReference type="Proteomes" id="UP000186698">
    <property type="component" value="Unplaced"/>
</dbReference>
<dbReference type="GO" id="GO:0005856">
    <property type="term" value="C:cytoskeleton"/>
    <property type="evidence" value="ECO:0007669"/>
    <property type="project" value="UniProtKB-ARBA"/>
</dbReference>
<dbReference type="InterPro" id="IPR051147">
    <property type="entry name" value="CFAP_domain-containing"/>
</dbReference>
<dbReference type="InterPro" id="IPR025252">
    <property type="entry name" value="DUF4200"/>
</dbReference>
<dbReference type="PANTHER" id="PTHR21683:SF15">
    <property type="entry name" value="COILED-COIL DOMAIN-CONTAINING PROTEIN 42 LIKE-2"/>
    <property type="match status" value="1"/>
</dbReference>
<dbReference type="PANTHER" id="PTHR21683">
    <property type="entry name" value="COILED-COIL DOMAIN-CONTAINING PROTEIN 42 LIKE-2-LIKE-RELATED"/>
    <property type="match status" value="1"/>
</dbReference>
<dbReference type="Pfam" id="PF13863">
    <property type="entry name" value="DUF4200"/>
    <property type="match status" value="1"/>
</dbReference>
<name>CC42M_XENLA</name>
<accession>Q6NTM6</accession>
<proteinExistence type="evidence at transcript level"/>
<comment type="similarity">
    <text evidence="2">Belongs to the CFAP73 family.</text>
</comment>
<comment type="sequence caution" evidence="2">
    <conflict type="erroneous initiation">
        <sequence resource="EMBL-CDS" id="AAH68933"/>
    </conflict>
</comment>
<evidence type="ECO:0000255" key="1"/>
<evidence type="ECO:0000305" key="2"/>
<sequence>MEFDLGEYFRAAFEDKLLVKMPDREDDFMTPATRLLEKRREMVEVEQALSTQKEEFQMKSESLQQRRSELELKEEKLKDSLFKFDKFLKENDSKRKRALHKAAEERQMAAQKERDALRLQAENTQLMQRKHILLQRQEKNSIYQRYLQRVLERTDEFQEVQEMIDRFNTLMATQNKLLKRELKNQEHAEMEKARLLHYQEETRSQILELNNQIAQLQGELERARAVAFQWESRWAQIQNTAAENTLRLGRVRMATLNLFQTISKQMRLKTDISVEDTEAQLEKIQICFEDLAAIHKDLKKAEMVPQTPAVPTTN</sequence>
<keyword id="KW-0175">Coiled coil</keyword>
<keyword id="KW-1185">Reference proteome</keyword>
<reference key="1">
    <citation type="submission" date="2004-04" db="EMBL/GenBank/DDBJ databases">
        <authorList>
            <consortium name="NIH - Xenopus Gene Collection (XGC) project"/>
        </authorList>
    </citation>
    <scope>NUCLEOTIDE SEQUENCE [LARGE SCALE MRNA]</scope>
    <source>
        <tissue>Embryo</tissue>
    </source>
</reference>
<feature type="chain" id="PRO_0000343716" description="Coiled-coil domain-containing protein 42 like-2">
    <location>
        <begin position="1"/>
        <end position="314"/>
    </location>
</feature>
<feature type="coiled-coil region" evidence="1">
    <location>
        <begin position="34"/>
        <end position="139"/>
    </location>
</feature>
<feature type="coiled-coil region" evidence="1">
    <location>
        <begin position="175"/>
        <end position="233"/>
    </location>
</feature>
<protein>
    <recommendedName>
        <fullName evidence="2">Coiled-coil domain-containing protein 42 like-2</fullName>
    </recommendedName>
</protein>
<organism>
    <name type="scientific">Xenopus laevis</name>
    <name type="common">African clawed frog</name>
    <dbReference type="NCBI Taxonomy" id="8355"/>
    <lineage>
        <taxon>Eukaryota</taxon>
        <taxon>Metazoa</taxon>
        <taxon>Chordata</taxon>
        <taxon>Craniata</taxon>
        <taxon>Vertebrata</taxon>
        <taxon>Euteleostomi</taxon>
        <taxon>Amphibia</taxon>
        <taxon>Batrachia</taxon>
        <taxon>Anura</taxon>
        <taxon>Pipoidea</taxon>
        <taxon>Pipidae</taxon>
        <taxon>Xenopodinae</taxon>
        <taxon>Xenopus</taxon>
        <taxon>Xenopus</taxon>
    </lineage>
</organism>